<organism>
    <name type="scientific">Escherichia coli O9:H4 (strain HS)</name>
    <dbReference type="NCBI Taxonomy" id="331112"/>
    <lineage>
        <taxon>Bacteria</taxon>
        <taxon>Pseudomonadati</taxon>
        <taxon>Pseudomonadota</taxon>
        <taxon>Gammaproteobacteria</taxon>
        <taxon>Enterobacterales</taxon>
        <taxon>Enterobacteriaceae</taxon>
        <taxon>Escherichia</taxon>
    </lineage>
</organism>
<comment type="function">
    <text evidence="1">Catalyzes the final step of fatty acid oxidation in which acetyl-CoA is released and the CoA ester of a fatty acid two carbons shorter is formed.</text>
</comment>
<comment type="catalytic activity">
    <reaction evidence="1">
        <text>an acyl-CoA + acetyl-CoA = a 3-oxoacyl-CoA + CoA</text>
        <dbReference type="Rhea" id="RHEA:21564"/>
        <dbReference type="ChEBI" id="CHEBI:57287"/>
        <dbReference type="ChEBI" id="CHEBI:57288"/>
        <dbReference type="ChEBI" id="CHEBI:58342"/>
        <dbReference type="ChEBI" id="CHEBI:90726"/>
        <dbReference type="EC" id="2.3.1.16"/>
    </reaction>
</comment>
<comment type="pathway">
    <text evidence="1">Lipid metabolism; fatty acid beta-oxidation.</text>
</comment>
<comment type="subunit">
    <text evidence="1">Heterotetramer of two alpha chains (FadJ) and two beta chains (FadI).</text>
</comment>
<comment type="subcellular location">
    <subcellularLocation>
        <location evidence="1">Cytoplasm</location>
    </subcellularLocation>
</comment>
<comment type="similarity">
    <text evidence="1">Belongs to the thiolase-like superfamily. Thiolase family.</text>
</comment>
<gene>
    <name evidence="1" type="primary">fadI</name>
    <name type="ordered locus">EcHS_A2493</name>
</gene>
<protein>
    <recommendedName>
        <fullName evidence="1">3-ketoacyl-CoA thiolase</fullName>
        <ecNumber evidence="1">2.3.1.16</ecNumber>
    </recommendedName>
    <alternativeName>
        <fullName evidence="1">ACSs</fullName>
    </alternativeName>
    <alternativeName>
        <fullName evidence="1">Acetyl-CoA acyltransferase</fullName>
    </alternativeName>
    <alternativeName>
        <fullName evidence="1">Acyl-CoA ligase</fullName>
    </alternativeName>
    <alternativeName>
        <fullName evidence="1">Beta-ketothiolase</fullName>
    </alternativeName>
    <alternativeName>
        <fullName evidence="1">Fatty acid oxidation complex subunit beta</fullName>
    </alternativeName>
</protein>
<keyword id="KW-0012">Acyltransferase</keyword>
<keyword id="KW-0963">Cytoplasm</keyword>
<keyword id="KW-0276">Fatty acid metabolism</keyword>
<keyword id="KW-0442">Lipid degradation</keyword>
<keyword id="KW-0443">Lipid metabolism</keyword>
<keyword id="KW-0808">Transferase</keyword>
<sequence length="436" mass="46674">MGQVLPLVTRQGDRIAIVSGLRTPFARQATAFHGIPAVDLGKMVVGELLARSEIPAEVIEQLVFGQVVQMPEAPNIAREIVLGTGMNVHTDAYSVSRACATSFQAVANVAESLMAGTIRAGIAGGADSSSVLPIGVSKKLARVLVDFNKARIMRQRLKLFSRLRLRDLMPVPPAVAEYSTGLRMGDTAEQMAKTYGITREQQDALAHRSHQRAAQAWSDGKLKEEVMTAFIPPYKQPLVEDNNIRGNSSLADYAKLRPAFDRKHGTVTAANSTPLTDGAAAVILMTESRAKELGLVPLGYLRSYAFTAIDVWQDMLLGPAWSTPLALERAGLTMSDLTLIDMHEAFAAQTLANIQLLGSERFARDVLGRAHATGEVDDSKFNVLGGSIAYGHPFAATGARMITQTLHELRRRGGGFGLVTACAAGGLGAAMVLEAE</sequence>
<proteinExistence type="inferred from homology"/>
<name>FADI_ECOHS</name>
<feature type="chain" id="PRO_1000069496" description="3-ketoacyl-CoA thiolase">
    <location>
        <begin position="1"/>
        <end position="436"/>
    </location>
</feature>
<feature type="active site" description="Acyl-thioester intermediate" evidence="1">
    <location>
        <position position="99"/>
    </location>
</feature>
<feature type="active site" description="Proton acceptor" evidence="1">
    <location>
        <position position="392"/>
    </location>
</feature>
<feature type="active site" description="Proton acceptor" evidence="1">
    <location>
        <position position="422"/>
    </location>
</feature>
<reference key="1">
    <citation type="journal article" date="2008" name="J. Bacteriol.">
        <title>The pangenome structure of Escherichia coli: comparative genomic analysis of E. coli commensal and pathogenic isolates.</title>
        <authorList>
            <person name="Rasko D.A."/>
            <person name="Rosovitz M.J."/>
            <person name="Myers G.S.A."/>
            <person name="Mongodin E.F."/>
            <person name="Fricke W.F."/>
            <person name="Gajer P."/>
            <person name="Crabtree J."/>
            <person name="Sebaihia M."/>
            <person name="Thomson N.R."/>
            <person name="Chaudhuri R."/>
            <person name="Henderson I.R."/>
            <person name="Sperandio V."/>
            <person name="Ravel J."/>
        </authorList>
    </citation>
    <scope>NUCLEOTIDE SEQUENCE [LARGE SCALE GENOMIC DNA]</scope>
    <source>
        <strain>HS</strain>
    </source>
</reference>
<accession>A8A2L1</accession>
<dbReference type="EC" id="2.3.1.16" evidence="1"/>
<dbReference type="EMBL" id="CP000802">
    <property type="protein sequence ID" value="ABV06765.1"/>
    <property type="molecule type" value="Genomic_DNA"/>
</dbReference>
<dbReference type="RefSeq" id="WP_000531931.1">
    <property type="nucleotide sequence ID" value="NC_009800.1"/>
</dbReference>
<dbReference type="SMR" id="A8A2L1"/>
<dbReference type="KEGG" id="ecx:EcHS_A2493"/>
<dbReference type="HOGENOM" id="CLU_031026_2_0_6"/>
<dbReference type="UniPathway" id="UPA00659"/>
<dbReference type="GO" id="GO:0005829">
    <property type="term" value="C:cytosol"/>
    <property type="evidence" value="ECO:0007669"/>
    <property type="project" value="TreeGrafter"/>
</dbReference>
<dbReference type="GO" id="GO:0003988">
    <property type="term" value="F:acetyl-CoA C-acyltransferase activity"/>
    <property type="evidence" value="ECO:0007669"/>
    <property type="project" value="UniProtKB-UniRule"/>
</dbReference>
<dbReference type="GO" id="GO:0006635">
    <property type="term" value="P:fatty acid beta-oxidation"/>
    <property type="evidence" value="ECO:0007669"/>
    <property type="project" value="UniProtKB-UniRule"/>
</dbReference>
<dbReference type="CDD" id="cd00751">
    <property type="entry name" value="thiolase"/>
    <property type="match status" value="1"/>
</dbReference>
<dbReference type="FunFam" id="3.40.47.10:FF:000011">
    <property type="entry name" value="3-ketoacyl-CoA thiolase"/>
    <property type="match status" value="1"/>
</dbReference>
<dbReference type="Gene3D" id="3.40.47.10">
    <property type="match status" value="1"/>
</dbReference>
<dbReference type="HAMAP" id="MF_01618">
    <property type="entry name" value="FadI"/>
    <property type="match status" value="1"/>
</dbReference>
<dbReference type="InterPro" id="IPR012806">
    <property type="entry name" value="Ac-CoA_C-AcTrfase_FadI"/>
</dbReference>
<dbReference type="InterPro" id="IPR002155">
    <property type="entry name" value="Thiolase"/>
</dbReference>
<dbReference type="InterPro" id="IPR016039">
    <property type="entry name" value="Thiolase-like"/>
</dbReference>
<dbReference type="InterPro" id="IPR020615">
    <property type="entry name" value="Thiolase_acyl_enz_int_AS"/>
</dbReference>
<dbReference type="InterPro" id="IPR020610">
    <property type="entry name" value="Thiolase_AS"/>
</dbReference>
<dbReference type="InterPro" id="IPR020617">
    <property type="entry name" value="Thiolase_C"/>
</dbReference>
<dbReference type="InterPro" id="IPR020613">
    <property type="entry name" value="Thiolase_CS"/>
</dbReference>
<dbReference type="InterPro" id="IPR020616">
    <property type="entry name" value="Thiolase_N"/>
</dbReference>
<dbReference type="NCBIfam" id="TIGR01930">
    <property type="entry name" value="AcCoA-C-Actrans"/>
    <property type="match status" value="1"/>
</dbReference>
<dbReference type="NCBIfam" id="TIGR02446">
    <property type="entry name" value="FadI"/>
    <property type="match status" value="1"/>
</dbReference>
<dbReference type="NCBIfam" id="NF006516">
    <property type="entry name" value="PRK08963.1"/>
    <property type="match status" value="1"/>
</dbReference>
<dbReference type="PANTHER" id="PTHR18919:SF107">
    <property type="entry name" value="ACETYL-COA ACETYLTRANSFERASE, CYTOSOLIC"/>
    <property type="match status" value="1"/>
</dbReference>
<dbReference type="PANTHER" id="PTHR18919">
    <property type="entry name" value="ACETYL-COA C-ACYLTRANSFERASE"/>
    <property type="match status" value="1"/>
</dbReference>
<dbReference type="Pfam" id="PF02803">
    <property type="entry name" value="Thiolase_C"/>
    <property type="match status" value="1"/>
</dbReference>
<dbReference type="Pfam" id="PF00108">
    <property type="entry name" value="Thiolase_N"/>
    <property type="match status" value="1"/>
</dbReference>
<dbReference type="PIRSF" id="PIRSF000429">
    <property type="entry name" value="Ac-CoA_Ac_transf"/>
    <property type="match status" value="1"/>
</dbReference>
<dbReference type="SUPFAM" id="SSF53901">
    <property type="entry name" value="Thiolase-like"/>
    <property type="match status" value="2"/>
</dbReference>
<dbReference type="PROSITE" id="PS00098">
    <property type="entry name" value="THIOLASE_1"/>
    <property type="match status" value="1"/>
</dbReference>
<dbReference type="PROSITE" id="PS00737">
    <property type="entry name" value="THIOLASE_2"/>
    <property type="match status" value="1"/>
</dbReference>
<dbReference type="PROSITE" id="PS00099">
    <property type="entry name" value="THIOLASE_3"/>
    <property type="match status" value="1"/>
</dbReference>
<evidence type="ECO:0000255" key="1">
    <source>
        <dbReference type="HAMAP-Rule" id="MF_01618"/>
    </source>
</evidence>